<dbReference type="EMBL" id="AK030825">
    <property type="protein sequence ID" value="BAC27149.1"/>
    <property type="molecule type" value="mRNA"/>
</dbReference>
<dbReference type="EMBL" id="AK042033">
    <property type="protein sequence ID" value="BAC31139.1"/>
    <property type="status" value="ALT_FRAME"/>
    <property type="molecule type" value="mRNA"/>
</dbReference>
<dbReference type="EMBL" id="AK088011">
    <property type="protein sequence ID" value="BAC40093.1"/>
    <property type="molecule type" value="mRNA"/>
</dbReference>
<dbReference type="EMBL" id="AL646047">
    <property type="status" value="NOT_ANNOTATED_CDS"/>
    <property type="molecule type" value="Genomic_DNA"/>
</dbReference>
<dbReference type="EMBL" id="BC028661">
    <property type="protein sequence ID" value="AAH28661.1"/>
    <property type="molecule type" value="mRNA"/>
</dbReference>
<dbReference type="EMBL" id="AF426468">
    <property type="protein sequence ID" value="AAL26548.1"/>
    <property type="molecule type" value="mRNA"/>
</dbReference>
<dbReference type="CCDS" id="CCDS24421.1"/>
<dbReference type="RefSeq" id="NP_848534.2">
    <property type="nucleotide sequence ID" value="NM_178440.4"/>
</dbReference>
<dbReference type="SMR" id="Q5SUA5"/>
<dbReference type="BioGRID" id="232896">
    <property type="interactions" value="8"/>
</dbReference>
<dbReference type="FunCoup" id="Q5SUA5">
    <property type="interactions" value="334"/>
</dbReference>
<dbReference type="IntAct" id="Q5SUA5">
    <property type="interactions" value="3"/>
</dbReference>
<dbReference type="MINT" id="Q5SUA5"/>
<dbReference type="STRING" id="10090.ENSMUSP00000003459"/>
<dbReference type="GlyGen" id="Q5SUA5">
    <property type="glycosylation" value="2 sites, 1 O-linked glycan (1 site)"/>
</dbReference>
<dbReference type="iPTMnet" id="Q5SUA5"/>
<dbReference type="PhosphoSitePlus" id="Q5SUA5"/>
<dbReference type="jPOST" id="Q5SUA5"/>
<dbReference type="PaxDb" id="10090-ENSMUSP00000003459"/>
<dbReference type="PeptideAtlas" id="Q5SUA5"/>
<dbReference type="ProteomicsDB" id="287584"/>
<dbReference type="Antibodypedia" id="13492">
    <property type="antibodies" value="67 antibodies from 14 providers"/>
</dbReference>
<dbReference type="DNASU" id="246177"/>
<dbReference type="Ensembl" id="ENSMUST00000003459.4">
    <property type="protein sequence ID" value="ENSMUSP00000003459.4"/>
    <property type="gene ID" value="ENSMUSG00000020437.13"/>
</dbReference>
<dbReference type="GeneID" id="246177"/>
<dbReference type="KEGG" id="mmu:246177"/>
<dbReference type="UCSC" id="uc007hyt.2">
    <property type="organism name" value="mouse"/>
</dbReference>
<dbReference type="AGR" id="MGI:1927091"/>
<dbReference type="CTD" id="64005"/>
<dbReference type="MGI" id="MGI:1927091">
    <property type="gene designation" value="Myo1g"/>
</dbReference>
<dbReference type="VEuPathDB" id="HostDB:ENSMUSG00000020437"/>
<dbReference type="eggNOG" id="KOG0160">
    <property type="taxonomic scope" value="Eukaryota"/>
</dbReference>
<dbReference type="eggNOG" id="KOG0164">
    <property type="taxonomic scope" value="Eukaryota"/>
</dbReference>
<dbReference type="GeneTree" id="ENSGT00940000158053"/>
<dbReference type="HOGENOM" id="CLU_000192_7_7_1"/>
<dbReference type="InParanoid" id="Q5SUA5"/>
<dbReference type="OMA" id="MTYGDIG"/>
<dbReference type="OrthoDB" id="6108017at2759"/>
<dbReference type="PhylomeDB" id="Q5SUA5"/>
<dbReference type="TreeFam" id="TF312960"/>
<dbReference type="BioGRID-ORCS" id="246177">
    <property type="hits" value="4 hits in 77 CRISPR screens"/>
</dbReference>
<dbReference type="PRO" id="PR:Q5SUA5"/>
<dbReference type="Proteomes" id="UP000000589">
    <property type="component" value="Chromosome 11"/>
</dbReference>
<dbReference type="RNAct" id="Q5SUA5">
    <property type="molecule type" value="protein"/>
</dbReference>
<dbReference type="Bgee" id="ENSMUSG00000020437">
    <property type="expression patterns" value="Expressed in granulocyte and 75 other cell types or tissues"/>
</dbReference>
<dbReference type="ExpressionAtlas" id="Q5SUA5">
    <property type="expression patterns" value="baseline and differential"/>
</dbReference>
<dbReference type="GO" id="GO:0030175">
    <property type="term" value="C:filopodium"/>
    <property type="evidence" value="ECO:0000314"/>
    <property type="project" value="MGI"/>
</dbReference>
<dbReference type="GO" id="GO:0030027">
    <property type="term" value="C:lamellipodium"/>
    <property type="evidence" value="ECO:0000314"/>
    <property type="project" value="MGI"/>
</dbReference>
<dbReference type="GO" id="GO:0031256">
    <property type="term" value="C:leading edge membrane"/>
    <property type="evidence" value="ECO:0000314"/>
    <property type="project" value="MGI"/>
</dbReference>
<dbReference type="GO" id="GO:0005902">
    <property type="term" value="C:microvillus"/>
    <property type="evidence" value="ECO:0000314"/>
    <property type="project" value="MGI"/>
</dbReference>
<dbReference type="GO" id="GO:0016459">
    <property type="term" value="C:myosin complex"/>
    <property type="evidence" value="ECO:0007669"/>
    <property type="project" value="UniProtKB-KW"/>
</dbReference>
<dbReference type="GO" id="GO:0005654">
    <property type="term" value="C:nucleoplasm"/>
    <property type="evidence" value="ECO:0007669"/>
    <property type="project" value="Ensembl"/>
</dbReference>
<dbReference type="GO" id="GO:0001891">
    <property type="term" value="C:phagocytic cup"/>
    <property type="evidence" value="ECO:0000314"/>
    <property type="project" value="UniProtKB"/>
</dbReference>
<dbReference type="GO" id="GO:0005886">
    <property type="term" value="C:plasma membrane"/>
    <property type="evidence" value="ECO:0000314"/>
    <property type="project" value="UniProtKB"/>
</dbReference>
<dbReference type="GO" id="GO:0003779">
    <property type="term" value="F:actin binding"/>
    <property type="evidence" value="ECO:0007669"/>
    <property type="project" value="UniProtKB-KW"/>
</dbReference>
<dbReference type="GO" id="GO:0005524">
    <property type="term" value="F:ATP binding"/>
    <property type="evidence" value="ECO:0007669"/>
    <property type="project" value="UniProtKB-KW"/>
</dbReference>
<dbReference type="GO" id="GO:0005516">
    <property type="term" value="F:calmodulin binding"/>
    <property type="evidence" value="ECO:0007669"/>
    <property type="project" value="UniProtKB-KW"/>
</dbReference>
<dbReference type="GO" id="GO:0003774">
    <property type="term" value="F:cytoskeletal motor activity"/>
    <property type="evidence" value="ECO:0000304"/>
    <property type="project" value="UniProtKB"/>
</dbReference>
<dbReference type="GO" id="GO:0005547">
    <property type="term" value="F:phosphatidylinositol-3,4,5-trisphosphate binding"/>
    <property type="evidence" value="ECO:0000314"/>
    <property type="project" value="UniProtKB"/>
</dbReference>
<dbReference type="GO" id="GO:0043325">
    <property type="term" value="F:phosphatidylinositol-3,4-bisphosphate binding"/>
    <property type="evidence" value="ECO:0000314"/>
    <property type="project" value="UniProtKB"/>
</dbReference>
<dbReference type="GO" id="GO:0005546">
    <property type="term" value="F:phosphatidylinositol-4,5-bisphosphate binding"/>
    <property type="evidence" value="ECO:0000314"/>
    <property type="project" value="UniProtKB"/>
</dbReference>
<dbReference type="GO" id="GO:0071976">
    <property type="term" value="P:cell gliding"/>
    <property type="evidence" value="ECO:0000315"/>
    <property type="project" value="MGI"/>
</dbReference>
<dbReference type="GO" id="GO:0031589">
    <property type="term" value="P:cell-substrate adhesion"/>
    <property type="evidence" value="ECO:0000315"/>
    <property type="project" value="MGI"/>
</dbReference>
<dbReference type="GO" id="GO:0051649">
    <property type="term" value="P:establishment of localization in cell"/>
    <property type="evidence" value="ECO:0000315"/>
    <property type="project" value="MGI"/>
</dbReference>
<dbReference type="GO" id="GO:0006887">
    <property type="term" value="P:exocytosis"/>
    <property type="evidence" value="ECO:0000315"/>
    <property type="project" value="MGI"/>
</dbReference>
<dbReference type="GO" id="GO:0038096">
    <property type="term" value="P:Fc-gamma receptor signaling pathway involved in phagocytosis"/>
    <property type="evidence" value="ECO:0000315"/>
    <property type="project" value="UniProtKB"/>
</dbReference>
<dbReference type="GO" id="GO:0006909">
    <property type="term" value="P:phagocytosis"/>
    <property type="evidence" value="ECO:0000315"/>
    <property type="project" value="MGI"/>
</dbReference>
<dbReference type="GO" id="GO:0120117">
    <property type="term" value="P:T cell meandering migration"/>
    <property type="evidence" value="ECO:0000315"/>
    <property type="project" value="MGI"/>
</dbReference>
<dbReference type="GO" id="GO:0002456">
    <property type="term" value="P:T cell mediated immunity"/>
    <property type="evidence" value="ECO:0000315"/>
    <property type="project" value="UniProtKB"/>
</dbReference>
<dbReference type="CDD" id="cd01378">
    <property type="entry name" value="MYSc_Myo1"/>
    <property type="match status" value="1"/>
</dbReference>
<dbReference type="FunFam" id="1.20.5.4820:FF:000003">
    <property type="entry name" value="Unconventional myosin ID"/>
    <property type="match status" value="1"/>
</dbReference>
<dbReference type="FunFam" id="1.20.58.530:FF:000004">
    <property type="entry name" value="Unconventional myosin ID"/>
    <property type="match status" value="1"/>
</dbReference>
<dbReference type="FunFam" id="1.20.120.720:FF:000009">
    <property type="entry name" value="Unconventional myosin-Id"/>
    <property type="match status" value="1"/>
</dbReference>
<dbReference type="Gene3D" id="1.10.10.820">
    <property type="match status" value="1"/>
</dbReference>
<dbReference type="Gene3D" id="1.20.5.4820">
    <property type="match status" value="1"/>
</dbReference>
<dbReference type="Gene3D" id="1.20.58.530">
    <property type="match status" value="1"/>
</dbReference>
<dbReference type="Gene3D" id="3.40.850.10">
    <property type="entry name" value="Kinesin motor domain"/>
    <property type="match status" value="1"/>
</dbReference>
<dbReference type="Gene3D" id="1.20.120.720">
    <property type="entry name" value="Myosin VI head, motor domain, U50 subdomain"/>
    <property type="match status" value="1"/>
</dbReference>
<dbReference type="InterPro" id="IPR036961">
    <property type="entry name" value="Kinesin_motor_dom_sf"/>
</dbReference>
<dbReference type="InterPro" id="IPR001609">
    <property type="entry name" value="Myosin_head_motor_dom-like"/>
</dbReference>
<dbReference type="InterPro" id="IPR010926">
    <property type="entry name" value="Myosin_TH1"/>
</dbReference>
<dbReference type="InterPro" id="IPR036072">
    <property type="entry name" value="MYSc_Myo1"/>
</dbReference>
<dbReference type="InterPro" id="IPR027417">
    <property type="entry name" value="P-loop_NTPase"/>
</dbReference>
<dbReference type="PANTHER" id="PTHR13140">
    <property type="entry name" value="MYOSIN"/>
    <property type="match status" value="1"/>
</dbReference>
<dbReference type="PANTHER" id="PTHR13140:SF381">
    <property type="entry name" value="UNCONVENTIONAL MYOSIN-IG"/>
    <property type="match status" value="1"/>
</dbReference>
<dbReference type="Pfam" id="PF00063">
    <property type="entry name" value="Myosin_head"/>
    <property type="match status" value="1"/>
</dbReference>
<dbReference type="Pfam" id="PF06017">
    <property type="entry name" value="Myosin_TH1"/>
    <property type="match status" value="1"/>
</dbReference>
<dbReference type="PRINTS" id="PR00193">
    <property type="entry name" value="MYOSINHEAVY"/>
</dbReference>
<dbReference type="SMART" id="SM00242">
    <property type="entry name" value="MYSc"/>
    <property type="match status" value="1"/>
</dbReference>
<dbReference type="SUPFAM" id="SSF52540">
    <property type="entry name" value="P-loop containing nucleoside triphosphate hydrolases"/>
    <property type="match status" value="1"/>
</dbReference>
<dbReference type="PROSITE" id="PS51456">
    <property type="entry name" value="MYOSIN_MOTOR"/>
    <property type="match status" value="1"/>
</dbReference>
<dbReference type="PROSITE" id="PS51757">
    <property type="entry name" value="TH1"/>
    <property type="match status" value="1"/>
</dbReference>
<reference key="1">
    <citation type="journal article" date="2005" name="Science">
        <title>The transcriptional landscape of the mammalian genome.</title>
        <authorList>
            <person name="Carninci P."/>
            <person name="Kasukawa T."/>
            <person name="Katayama S."/>
            <person name="Gough J."/>
            <person name="Frith M.C."/>
            <person name="Maeda N."/>
            <person name="Oyama R."/>
            <person name="Ravasi T."/>
            <person name="Lenhard B."/>
            <person name="Wells C."/>
            <person name="Kodzius R."/>
            <person name="Shimokawa K."/>
            <person name="Bajic V.B."/>
            <person name="Brenner S.E."/>
            <person name="Batalov S."/>
            <person name="Forrest A.R."/>
            <person name="Zavolan M."/>
            <person name="Davis M.J."/>
            <person name="Wilming L.G."/>
            <person name="Aidinis V."/>
            <person name="Allen J.E."/>
            <person name="Ambesi-Impiombato A."/>
            <person name="Apweiler R."/>
            <person name="Aturaliya R.N."/>
            <person name="Bailey T.L."/>
            <person name="Bansal M."/>
            <person name="Baxter L."/>
            <person name="Beisel K.W."/>
            <person name="Bersano T."/>
            <person name="Bono H."/>
            <person name="Chalk A.M."/>
            <person name="Chiu K.P."/>
            <person name="Choudhary V."/>
            <person name="Christoffels A."/>
            <person name="Clutterbuck D.R."/>
            <person name="Crowe M.L."/>
            <person name="Dalla E."/>
            <person name="Dalrymple B.P."/>
            <person name="de Bono B."/>
            <person name="Della Gatta G."/>
            <person name="di Bernardo D."/>
            <person name="Down T."/>
            <person name="Engstrom P."/>
            <person name="Fagiolini M."/>
            <person name="Faulkner G."/>
            <person name="Fletcher C.F."/>
            <person name="Fukushima T."/>
            <person name="Furuno M."/>
            <person name="Futaki S."/>
            <person name="Gariboldi M."/>
            <person name="Georgii-Hemming P."/>
            <person name="Gingeras T.R."/>
            <person name="Gojobori T."/>
            <person name="Green R.E."/>
            <person name="Gustincich S."/>
            <person name="Harbers M."/>
            <person name="Hayashi Y."/>
            <person name="Hensch T.K."/>
            <person name="Hirokawa N."/>
            <person name="Hill D."/>
            <person name="Huminiecki L."/>
            <person name="Iacono M."/>
            <person name="Ikeo K."/>
            <person name="Iwama A."/>
            <person name="Ishikawa T."/>
            <person name="Jakt M."/>
            <person name="Kanapin A."/>
            <person name="Katoh M."/>
            <person name="Kawasawa Y."/>
            <person name="Kelso J."/>
            <person name="Kitamura H."/>
            <person name="Kitano H."/>
            <person name="Kollias G."/>
            <person name="Krishnan S.P."/>
            <person name="Kruger A."/>
            <person name="Kummerfeld S.K."/>
            <person name="Kurochkin I.V."/>
            <person name="Lareau L.F."/>
            <person name="Lazarevic D."/>
            <person name="Lipovich L."/>
            <person name="Liu J."/>
            <person name="Liuni S."/>
            <person name="McWilliam S."/>
            <person name="Madan Babu M."/>
            <person name="Madera M."/>
            <person name="Marchionni L."/>
            <person name="Matsuda H."/>
            <person name="Matsuzawa S."/>
            <person name="Miki H."/>
            <person name="Mignone F."/>
            <person name="Miyake S."/>
            <person name="Morris K."/>
            <person name="Mottagui-Tabar S."/>
            <person name="Mulder N."/>
            <person name="Nakano N."/>
            <person name="Nakauchi H."/>
            <person name="Ng P."/>
            <person name="Nilsson R."/>
            <person name="Nishiguchi S."/>
            <person name="Nishikawa S."/>
            <person name="Nori F."/>
            <person name="Ohara O."/>
            <person name="Okazaki Y."/>
            <person name="Orlando V."/>
            <person name="Pang K.C."/>
            <person name="Pavan W.J."/>
            <person name="Pavesi G."/>
            <person name="Pesole G."/>
            <person name="Petrovsky N."/>
            <person name="Piazza S."/>
            <person name="Reed J."/>
            <person name="Reid J.F."/>
            <person name="Ring B.Z."/>
            <person name="Ringwald M."/>
            <person name="Rost B."/>
            <person name="Ruan Y."/>
            <person name="Salzberg S.L."/>
            <person name="Sandelin A."/>
            <person name="Schneider C."/>
            <person name="Schoenbach C."/>
            <person name="Sekiguchi K."/>
            <person name="Semple C.A."/>
            <person name="Seno S."/>
            <person name="Sessa L."/>
            <person name="Sheng Y."/>
            <person name="Shibata Y."/>
            <person name="Shimada H."/>
            <person name="Shimada K."/>
            <person name="Silva D."/>
            <person name="Sinclair B."/>
            <person name="Sperling S."/>
            <person name="Stupka E."/>
            <person name="Sugiura K."/>
            <person name="Sultana R."/>
            <person name="Takenaka Y."/>
            <person name="Taki K."/>
            <person name="Tammoja K."/>
            <person name="Tan S.L."/>
            <person name="Tang S."/>
            <person name="Taylor M.S."/>
            <person name="Tegner J."/>
            <person name="Teichmann S.A."/>
            <person name="Ueda H.R."/>
            <person name="van Nimwegen E."/>
            <person name="Verardo R."/>
            <person name="Wei C.L."/>
            <person name="Yagi K."/>
            <person name="Yamanishi H."/>
            <person name="Zabarovsky E."/>
            <person name="Zhu S."/>
            <person name="Zimmer A."/>
            <person name="Hide W."/>
            <person name="Bult C."/>
            <person name="Grimmond S.M."/>
            <person name="Teasdale R.D."/>
            <person name="Liu E.T."/>
            <person name="Brusic V."/>
            <person name="Quackenbush J."/>
            <person name="Wahlestedt C."/>
            <person name="Mattick J.S."/>
            <person name="Hume D.A."/>
            <person name="Kai C."/>
            <person name="Sasaki D."/>
            <person name="Tomaru Y."/>
            <person name="Fukuda S."/>
            <person name="Kanamori-Katayama M."/>
            <person name="Suzuki M."/>
            <person name="Aoki J."/>
            <person name="Arakawa T."/>
            <person name="Iida J."/>
            <person name="Imamura K."/>
            <person name="Itoh M."/>
            <person name="Kato T."/>
            <person name="Kawaji H."/>
            <person name="Kawagashira N."/>
            <person name="Kawashima T."/>
            <person name="Kojima M."/>
            <person name="Kondo S."/>
            <person name="Konno H."/>
            <person name="Nakano K."/>
            <person name="Ninomiya N."/>
            <person name="Nishio T."/>
            <person name="Okada M."/>
            <person name="Plessy C."/>
            <person name="Shibata K."/>
            <person name="Shiraki T."/>
            <person name="Suzuki S."/>
            <person name="Tagami M."/>
            <person name="Waki K."/>
            <person name="Watahiki A."/>
            <person name="Okamura-Oho Y."/>
            <person name="Suzuki H."/>
            <person name="Kawai J."/>
            <person name="Hayashizaki Y."/>
        </authorList>
    </citation>
    <scope>NUCLEOTIDE SEQUENCE [LARGE SCALE MRNA]</scope>
    <source>
        <strain>C57BL/6J</strain>
        <strain>NOD</strain>
        <tissue>Thymus</tissue>
    </source>
</reference>
<reference key="2">
    <citation type="journal article" date="2009" name="PLoS Biol.">
        <title>Lineage-specific biology revealed by a finished genome assembly of the mouse.</title>
        <authorList>
            <person name="Church D.M."/>
            <person name="Goodstadt L."/>
            <person name="Hillier L.W."/>
            <person name="Zody M.C."/>
            <person name="Goldstein S."/>
            <person name="She X."/>
            <person name="Bult C.J."/>
            <person name="Agarwala R."/>
            <person name="Cherry J.L."/>
            <person name="DiCuccio M."/>
            <person name="Hlavina W."/>
            <person name="Kapustin Y."/>
            <person name="Meric P."/>
            <person name="Maglott D."/>
            <person name="Birtle Z."/>
            <person name="Marques A.C."/>
            <person name="Graves T."/>
            <person name="Zhou S."/>
            <person name="Teague B."/>
            <person name="Potamousis K."/>
            <person name="Churas C."/>
            <person name="Place M."/>
            <person name="Herschleb J."/>
            <person name="Runnheim R."/>
            <person name="Forrest D."/>
            <person name="Amos-Landgraf J."/>
            <person name="Schwartz D.C."/>
            <person name="Cheng Z."/>
            <person name="Lindblad-Toh K."/>
            <person name="Eichler E.E."/>
            <person name="Ponting C.P."/>
        </authorList>
    </citation>
    <scope>NUCLEOTIDE SEQUENCE [LARGE SCALE GENOMIC DNA]</scope>
    <source>
        <strain>C57BL/6J</strain>
    </source>
</reference>
<reference key="3">
    <citation type="journal article" date="2004" name="Genome Res.">
        <title>The status, quality, and expansion of the NIH full-length cDNA project: the Mammalian Gene Collection (MGC).</title>
        <authorList>
            <consortium name="The MGC Project Team"/>
        </authorList>
    </citation>
    <scope>NUCLEOTIDE SEQUENCE [LARGE SCALE MRNA] OF 537-1024</scope>
    <source>
        <strain>C57BL/6J</strain>
        <tissue>Thymus</tissue>
    </source>
</reference>
<reference key="4">
    <citation type="journal article" date="2002" name="J. Assoc. Res. Otolaryngol.">
        <title>Myosin-I isozymes in neonatal rodent auditory and vestibular epithelia.</title>
        <authorList>
            <person name="Dumont R.A."/>
            <person name="Zhao Y.-D."/>
            <person name="Holt J.R."/>
            <person name="Baehler M."/>
            <person name="Gillespie P.G."/>
        </authorList>
    </citation>
    <scope>NUCLEOTIDE SEQUENCE [MRNA] OF 869-994</scope>
    <source>
        <strain>C57BL/6J</strain>
    </source>
</reference>
<reference key="5">
    <citation type="journal article" date="2010" name="Cell">
        <title>A tissue-specific atlas of mouse protein phosphorylation and expression.</title>
        <authorList>
            <person name="Huttlin E.L."/>
            <person name="Jedrychowski M.P."/>
            <person name="Elias J.E."/>
            <person name="Goswami T."/>
            <person name="Rad R."/>
            <person name="Beausoleil S.A."/>
            <person name="Villen J."/>
            <person name="Haas W."/>
            <person name="Sowa M.E."/>
            <person name="Gygi S.P."/>
        </authorList>
    </citation>
    <scope>IDENTIFICATION BY MASS SPECTROMETRY [LARGE SCALE ANALYSIS]</scope>
    <source>
        <tissue>Spleen</tissue>
    </source>
</reference>
<reference key="6">
    <citation type="journal article" date="2010" name="J. Biol. Chem.">
        <title>Myosin 1G is an abundant class I myosin in lymphocytes whose localization at the plasma membrane depends on its ancient divergent pleckstrin homology (PH) domain (Myo1PH).</title>
        <authorList>
            <person name="Patino-Lopez G."/>
            <person name="Aravind L."/>
            <person name="Dong X."/>
            <person name="Kruhlak M.J."/>
            <person name="Ostap E.M."/>
            <person name="Shaw S."/>
        </authorList>
    </citation>
    <scope>SUBCELLULAR LOCATION</scope>
    <scope>TISSUE SPECIFICITY</scope>
</reference>
<reference key="7">
    <citation type="journal article" date="2010" name="FEBS Lett.">
        <title>Myosin 1G (Myo1G) is a haematopoietic specific myosin that localises to the plasma membrane and regulates cell elasticity.</title>
        <authorList>
            <person name="Olety B."/>
            <person name="Walte M."/>
            <person name="Honnert U."/>
            <person name="Schillers H."/>
            <person name="Bahler M."/>
        </authorList>
    </citation>
    <scope>SUBCELLULAR LOCATION</scope>
    <scope>TISSUE SPECIFICITY</scope>
    <scope>MUTAGENESIS OF GLY-111 AND ARG-167</scope>
</reference>
<reference key="8">
    <citation type="journal article" date="2012" name="J. Cell Sci.">
        <title>The motor protein myosin 1G functions in FcgammaR-mediated phagocytosis.</title>
        <authorList>
            <person name="Dart A.E."/>
            <person name="Tollis S."/>
            <person name="Bright M.D."/>
            <person name="Frankel G."/>
            <person name="Endres R.G."/>
        </authorList>
    </citation>
    <scope>FUNCTION</scope>
    <scope>SUBCELLULAR LOCATION</scope>
    <scope>DOMAIN</scope>
    <scope>MUTAGENESIS OF LYS-883 AND ARG-893</scope>
</reference>
<reference key="9">
    <citation type="journal article" date="2014" name="Cell">
        <title>Detection of rare antigen-presenting cells through T cell-intrinsic meandering motility, mediated by Myo1g.</title>
        <authorList>
            <person name="Gerard A."/>
            <person name="Patino-Lopez G."/>
            <person name="Beemiller P."/>
            <person name="Nambiar R."/>
            <person name="Ben-Aissa K."/>
            <person name="Liu Y."/>
            <person name="Totah F.J."/>
            <person name="Tyska M.J."/>
            <person name="Shaw S."/>
            <person name="Krummel M.F."/>
        </authorList>
    </citation>
    <scope>FUNCTION</scope>
    <scope>SUBCELLULAR LOCATION</scope>
    <scope>TISSUE SPECIFICITY</scope>
    <scope>DISRUPTION PHENOTYPE</scope>
</reference>
<reference key="10">
    <citation type="journal article" date="2014" name="Eur. J. Immunol.">
        <title>Myosin 1g regulates cytoskeleton plasticity, cell migration, exocytosis, and endocytosis in B lymphocytes.</title>
        <authorList>
            <person name="Maravillas-Montero J.L."/>
            <person name="Lopez-Ortega O."/>
            <person name="Patino-Lopez G."/>
            <person name="Santos-Argumedo L."/>
        </authorList>
    </citation>
    <scope>FUNCTION</scope>
    <scope>SUBCELLULAR LOCATION</scope>
    <scope>TISSUE SPECIFICITY</scope>
</reference>
<accession>Q5SUA5</accession>
<accession>Q8BIT8</accession>
<accession>Q8BJ17</accession>
<accession>Q8BJ65</accession>
<accession>Q8R019</accession>
<accession>Q91ZI1</accession>
<proteinExistence type="evidence at protein level"/>
<protein>
    <recommendedName>
        <fullName>Unconventional myosin-Ig</fullName>
    </recommendedName>
</protein>
<name>MYO1G_MOUSE</name>
<evidence type="ECO:0000250" key="1"/>
<evidence type="ECO:0000255" key="2">
    <source>
        <dbReference type="PROSITE-ProRule" id="PRU00782"/>
    </source>
</evidence>
<evidence type="ECO:0000255" key="3">
    <source>
        <dbReference type="PROSITE-ProRule" id="PRU01093"/>
    </source>
</evidence>
<evidence type="ECO:0000256" key="4">
    <source>
        <dbReference type="SAM" id="MobiDB-lite"/>
    </source>
</evidence>
<evidence type="ECO:0000269" key="5">
    <source>
    </source>
</evidence>
<evidence type="ECO:0000269" key="6">
    <source>
    </source>
</evidence>
<evidence type="ECO:0000269" key="7">
    <source>
    </source>
</evidence>
<evidence type="ECO:0000269" key="8">
    <source>
    </source>
</evidence>
<evidence type="ECO:0000269" key="9">
    <source>
    </source>
</evidence>
<evidence type="ECO:0000305" key="10"/>
<sequence>MLAVGRMEDEEGPEYGKPDFVLLDQLTMEDFMKNLELRFEKGRIYTYIGEVLVSVNPYQELPLYGPEAIAKYQGRELYERPPHLYAVANAAYKAMKRRSRDTCIVISGESGAGKTEASKHIMQYIAAVTNPSQRAEVERVKNVLLKSTCVLEAFGNARTNRNHNSSRFGKYMDINFDFKGDPVGGHIHSYLLEKSRVLKQHVGERNFHAFYQLLRGSEDQELQGLHLERNPAVYNFTRQGAGLNMGVHNALDSDEKSHQGVMEAMRIIGFSPDEVESIHRILAAILHLGNIEFVETEENGPQKGGLEVADEALVGYVAKLTATPRDLVLRTLLARTVASGGREVIEKSHTVAEASYARDACAKAMYQRLFEWVVNKINSIMEPRNRDPRCDGKDTVIGVLDIYGFEVFPVNSFEQFCINYCNEKLQQLFIQLILKQEQEEYEREGIAWQTIEYFNNATIVELVEQPHRGILAVLDEACSTAGPITDRIFLQTLDTHHRHHPHYSSRQLCPTDKTMEFGRDFQIKHYAGDVTYSVEGFIDKNRDSLFQDFKRLLYNSVDPTLRAMWPDGQQDITEVTKRPLTAGTLFKNSMVALVENLASKEPFYVRCIKPNEDKVAGRLDEAHCRHQVEYLGLLENVRVRRAGFASRQPYPRFLLRYKMTCEYTWPNHLLGSDRDAVSALLEQHGLQGDVAFGHSKLFIRSPRTLVTLEQSRARLIPIIVLLLQKAWRGTLARWHCRRLRAIYTIMRWFRRHKVRAHLIELQRRFQAARQPPLYGRDLVWPTPPAVLQPFQDTCRVLFSRWRARQLVKNIPPSDMIQIKAKVAAMGALQGLRQDWGCQRAWARDYLSSDTDNPTASHLFAEQLKALREKDGFGSVLFSSHVRKVNRFRKSRDRALLLTDRYLYKLEPGRQYRVMRAVPLEAVTGLSVTSGRDQLVVLHAQGYDDLVVCLHRSQPPLDNRIGELVGMLAAHCQGEGRTLEVRVSDCIPLSQRGARRLISVEPRPEQPEPDFQSSRSTFTLLWPSH</sequence>
<keyword id="KW-0009">Actin-binding</keyword>
<keyword id="KW-1064">Adaptive immunity</keyword>
<keyword id="KW-0067">ATP-binding</keyword>
<keyword id="KW-0112">Calmodulin-binding</keyword>
<keyword id="KW-1003">Cell membrane</keyword>
<keyword id="KW-0966">Cell projection</keyword>
<keyword id="KW-0391">Immunity</keyword>
<keyword id="KW-0446">Lipid-binding</keyword>
<keyword id="KW-0472">Membrane</keyword>
<keyword id="KW-0505">Motor protein</keyword>
<keyword id="KW-0518">Myosin</keyword>
<keyword id="KW-0547">Nucleotide-binding</keyword>
<keyword id="KW-1185">Reference proteome</keyword>
<organism>
    <name type="scientific">Mus musculus</name>
    <name type="common">Mouse</name>
    <dbReference type="NCBI Taxonomy" id="10090"/>
    <lineage>
        <taxon>Eukaryota</taxon>
        <taxon>Metazoa</taxon>
        <taxon>Chordata</taxon>
        <taxon>Craniata</taxon>
        <taxon>Vertebrata</taxon>
        <taxon>Euteleostomi</taxon>
        <taxon>Mammalia</taxon>
        <taxon>Eutheria</taxon>
        <taxon>Euarchontoglires</taxon>
        <taxon>Glires</taxon>
        <taxon>Rodentia</taxon>
        <taxon>Myomorpha</taxon>
        <taxon>Muroidea</taxon>
        <taxon>Muridae</taxon>
        <taxon>Murinae</taxon>
        <taxon>Mus</taxon>
        <taxon>Mus</taxon>
    </lineage>
</organism>
<feature type="chain" id="PRO_0000340318" description="Unconventional myosin-Ig">
    <location>
        <begin position="1"/>
        <end position="1024"/>
    </location>
</feature>
<feature type="domain" description="Myosin motor" evidence="2">
    <location>
        <begin position="15"/>
        <end position="713"/>
    </location>
</feature>
<feature type="domain" description="IQ">
    <location>
        <begin position="716"/>
        <end position="745"/>
    </location>
</feature>
<feature type="domain" description="TH1" evidence="3">
    <location>
        <begin position="830"/>
        <end position="1023"/>
    </location>
</feature>
<feature type="region of interest" description="Actin-binding" evidence="2">
    <location>
        <begin position="590"/>
        <end position="612"/>
    </location>
</feature>
<feature type="region of interest" description="Disordered" evidence="4">
    <location>
        <begin position="999"/>
        <end position="1024"/>
    </location>
</feature>
<feature type="binding site" evidence="1">
    <location>
        <begin position="108"/>
        <end position="115"/>
    </location>
    <ligand>
        <name>ATP</name>
        <dbReference type="ChEBI" id="CHEBI:30616"/>
    </ligand>
</feature>
<feature type="mutagenesis site" description="Does not affect localization to the plasma membrane." evidence="5">
    <original>G</original>
    <variation>R</variation>
    <location>
        <position position="111"/>
    </location>
</feature>
<feature type="mutagenesis site" description="Does not affect localization to the plasma membrane." evidence="5">
    <original>R</original>
    <variation>C</variation>
    <location>
        <position position="167"/>
    </location>
</feature>
<feature type="mutagenesis site" description="Abolishes localization to phagocytic cups; when associated with A-893." evidence="7">
    <original>K</original>
    <variation>A</variation>
    <location>
        <position position="883"/>
    </location>
</feature>
<feature type="mutagenesis site" description="Abolishes localization to phagocytic cups; when associated with A-883." evidence="7">
    <original>R</original>
    <variation>A</variation>
    <location>
        <position position="893"/>
    </location>
</feature>
<feature type="sequence conflict" description="In Ref. 1; BAC27149." evidence="10" ref="1">
    <original>L</original>
    <variation>Q</variation>
    <location>
        <position position="425"/>
    </location>
</feature>
<feature type="sequence conflict" description="In Ref. 1; BAC40093." evidence="10" ref="1">
    <original>H</original>
    <variation>R</variation>
    <location>
        <position position="467"/>
    </location>
</feature>
<feature type="sequence conflict" description="In Ref. 1; BAC40093." evidence="10" ref="1">
    <original>I</original>
    <variation>T</variation>
    <location>
        <position position="816"/>
    </location>
</feature>
<gene>
    <name type="primary">Myo1g</name>
</gene>
<comment type="function">
    <text evidence="7 8 9">Unconventional myosin required during immune response for detection of rare antigen-presenting cells by regulating T-cell migration (PubMed:25083865). Unconventional myosins are actin-based motor molecules with ATPase activity and serve in intracellular movements. Acts as a regulator of T-cell migration by generating membrane tension, enforcing cell-intrinsic meandering search, thereby enhancing detection of rare antigens during lymph-node surveillance, enabling pathogen eradication (PubMed:25083865). Also required in B-cells, where it regulates different membrane/cytoskeleton-dependent processes (PubMed:24310084). Involved in Fc-gamma receptor (Fc-gamma-R) phagocytosis (PubMed:23038771).</text>
</comment>
<comment type="subunit">
    <text evidence="1">Interacts with calmodulin; via its IQ motifs.</text>
</comment>
<comment type="subcellular location">
    <subcellularLocation>
        <location evidence="5 6 8 9">Cell membrane</location>
        <topology evidence="5 6 8 9">Peripheral membrane protein</topology>
    </subcellularLocation>
    <subcellularLocation>
        <location evidence="7">Cell projection</location>
        <location evidence="7">Phagocytic cup</location>
    </subcellularLocation>
    <text evidence="7 9">Recruited to Fc-gamma receptor (Fc-gamma-R) phagocytic cup (PubMed:23038771). In T-cells, transiently accumulates in discrete areas at the plasma membrane of migrating cells or when membranes are deformed (PubMed:25083865).</text>
</comment>
<comment type="tissue specificity">
    <text evidence="5 6 8 9">Specifically expressed in hematopoietic cells. Detected in adult tissues of the immune system such as thymus, lymph nodes and spleen, but not in brain, lung, heart, liver, small intestine, testis and kidney (at protein level). Highly expressed in T-lymphocytes; constitutes the most highly expressed class I myosin in naive CD4 and CD8 T-cells. Also present in B-lymphocytes.</text>
</comment>
<comment type="domain">
    <text evidence="7">The myosin tail domain mediates binding to phosphatidylinositol-3,4-bisphosphate (PtdIns(3,4)P2), phosphatidylinositol-4,5-bisphosphate (PtdIns(4,5)P2) and phosphatidylinositol-3,4,5-trisphosphate (PtdIns(3,4,5)P3) and binds to membranous compartments. It is required for recruitment to Fc-gamma receptor (Fc-gamma-R) phagocytic cups.</text>
</comment>
<comment type="disruption phenotype">
    <text evidence="9">T-cells display impaired migration patterns and are less efficient in scanning and evaluating antigen-presenting cells. T-cells show global reduction in membrane tension, while their homeostatic tissue distribution and responsiveness to T-cell receptor (TCR) engagement are unaffected. However, T-cells move faster and straighter, leading to defects in detection of antigen-presenting cells, specifically for detection of rare antigens.</text>
</comment>
<comment type="similarity">
    <text evidence="10">Belongs to the TRAFAC class myosin-kinesin ATPase superfamily. Myosin family.</text>
</comment>
<comment type="caution">
    <text evidence="10">It is uncertain whether Met-1 or Met-7 is the initiator.</text>
</comment>
<comment type="caution">
    <text evidence="10">Represents an unconventional myosin. This protein should not be confused with the conventional myosin-1 (MYH1).</text>
</comment>
<comment type="sequence caution" evidence="10">
    <conflict type="frameshift">
        <sequence resource="EMBL-CDS" id="BAC31139"/>
    </conflict>
</comment>